<accession>Q6G9A5</accession>
<proteinExistence type="inferred from homology"/>
<dbReference type="EC" id="2.7.7.72" evidence="1"/>
<dbReference type="EMBL" id="BX571857">
    <property type="protein sequence ID" value="CAG43176.1"/>
    <property type="molecule type" value="Genomic_DNA"/>
</dbReference>
<dbReference type="RefSeq" id="WP_000361543.1">
    <property type="nucleotide sequence ID" value="NC_002953.3"/>
</dbReference>
<dbReference type="SMR" id="Q6G9A5"/>
<dbReference type="KEGG" id="sas:SAS1400"/>
<dbReference type="HOGENOM" id="CLU_015961_3_0_9"/>
<dbReference type="GO" id="GO:0005524">
    <property type="term" value="F:ATP binding"/>
    <property type="evidence" value="ECO:0007669"/>
    <property type="project" value="UniProtKB-UniRule"/>
</dbReference>
<dbReference type="GO" id="GO:0004810">
    <property type="term" value="F:CCA tRNA nucleotidyltransferase activity"/>
    <property type="evidence" value="ECO:0007669"/>
    <property type="project" value="UniProtKB-UniRule"/>
</dbReference>
<dbReference type="GO" id="GO:0000287">
    <property type="term" value="F:magnesium ion binding"/>
    <property type="evidence" value="ECO:0007669"/>
    <property type="project" value="UniProtKB-UniRule"/>
</dbReference>
<dbReference type="GO" id="GO:0000049">
    <property type="term" value="F:tRNA binding"/>
    <property type="evidence" value="ECO:0007669"/>
    <property type="project" value="UniProtKB-UniRule"/>
</dbReference>
<dbReference type="GO" id="GO:0042245">
    <property type="term" value="P:RNA repair"/>
    <property type="evidence" value="ECO:0007669"/>
    <property type="project" value="UniProtKB-KW"/>
</dbReference>
<dbReference type="GO" id="GO:0001680">
    <property type="term" value="P:tRNA 3'-terminal CCA addition"/>
    <property type="evidence" value="ECO:0007669"/>
    <property type="project" value="UniProtKB-UniRule"/>
</dbReference>
<dbReference type="CDD" id="cd05398">
    <property type="entry name" value="NT_ClassII-CCAase"/>
    <property type="match status" value="1"/>
</dbReference>
<dbReference type="Gene3D" id="1.10.246.80">
    <property type="match status" value="1"/>
</dbReference>
<dbReference type="Gene3D" id="3.30.460.10">
    <property type="entry name" value="Beta Polymerase, domain 2"/>
    <property type="match status" value="1"/>
</dbReference>
<dbReference type="Gene3D" id="1.10.3090.10">
    <property type="entry name" value="cca-adding enzyme, domain 2"/>
    <property type="match status" value="1"/>
</dbReference>
<dbReference type="HAMAP" id="MF_01263">
    <property type="entry name" value="CCA_bact_type3"/>
    <property type="match status" value="1"/>
</dbReference>
<dbReference type="InterPro" id="IPR050264">
    <property type="entry name" value="Bact_CCA-adding_enz_type3_sf"/>
</dbReference>
<dbReference type="InterPro" id="IPR032810">
    <property type="entry name" value="CCA-adding_enz_C"/>
</dbReference>
<dbReference type="InterPro" id="IPR023068">
    <property type="entry name" value="CCA-adding_enz_firmicutes"/>
</dbReference>
<dbReference type="InterPro" id="IPR043519">
    <property type="entry name" value="NT_sf"/>
</dbReference>
<dbReference type="InterPro" id="IPR002646">
    <property type="entry name" value="PolA_pol_head_dom"/>
</dbReference>
<dbReference type="InterPro" id="IPR032828">
    <property type="entry name" value="PolyA_RNA-bd"/>
</dbReference>
<dbReference type="NCBIfam" id="NF009814">
    <property type="entry name" value="PRK13299.1"/>
    <property type="match status" value="1"/>
</dbReference>
<dbReference type="PANTHER" id="PTHR46173">
    <property type="entry name" value="CCA TRNA NUCLEOTIDYLTRANSFERASE 1, MITOCHONDRIAL"/>
    <property type="match status" value="1"/>
</dbReference>
<dbReference type="PANTHER" id="PTHR46173:SF1">
    <property type="entry name" value="CCA TRNA NUCLEOTIDYLTRANSFERASE 1, MITOCHONDRIAL"/>
    <property type="match status" value="1"/>
</dbReference>
<dbReference type="Pfam" id="PF01743">
    <property type="entry name" value="PolyA_pol"/>
    <property type="match status" value="1"/>
</dbReference>
<dbReference type="Pfam" id="PF12627">
    <property type="entry name" value="PolyA_pol_RNAbd"/>
    <property type="match status" value="1"/>
</dbReference>
<dbReference type="Pfam" id="PF13735">
    <property type="entry name" value="tRNA_NucTran2_2"/>
    <property type="match status" value="1"/>
</dbReference>
<dbReference type="SUPFAM" id="SSF81301">
    <property type="entry name" value="Nucleotidyltransferase"/>
    <property type="match status" value="1"/>
</dbReference>
<dbReference type="SUPFAM" id="SSF81891">
    <property type="entry name" value="Poly A polymerase C-terminal region-like"/>
    <property type="match status" value="1"/>
</dbReference>
<name>CCA_STAAS</name>
<organism>
    <name type="scientific">Staphylococcus aureus (strain MSSA476)</name>
    <dbReference type="NCBI Taxonomy" id="282459"/>
    <lineage>
        <taxon>Bacteria</taxon>
        <taxon>Bacillati</taxon>
        <taxon>Bacillota</taxon>
        <taxon>Bacilli</taxon>
        <taxon>Bacillales</taxon>
        <taxon>Staphylococcaceae</taxon>
        <taxon>Staphylococcus</taxon>
    </lineage>
</organism>
<protein>
    <recommendedName>
        <fullName evidence="1">CCA-adding enzyme</fullName>
        <ecNumber evidence="1">2.7.7.72</ecNumber>
    </recommendedName>
    <alternativeName>
        <fullName evidence="1">CCA tRNA nucleotidyltransferase</fullName>
    </alternativeName>
    <alternativeName>
        <fullName evidence="1">tRNA CCA-pyrophosphorylase</fullName>
    </alternativeName>
    <alternativeName>
        <fullName evidence="1">tRNA adenylyl-/cytidylyl- transferase</fullName>
    </alternativeName>
    <alternativeName>
        <fullName evidence="1">tRNA nucleotidyltransferase</fullName>
    </alternativeName>
    <alternativeName>
        <fullName evidence="1">tRNA-NT</fullName>
    </alternativeName>
</protein>
<evidence type="ECO:0000255" key="1">
    <source>
        <dbReference type="HAMAP-Rule" id="MF_01263"/>
    </source>
</evidence>
<feature type="chain" id="PRO_0000139049" description="CCA-adding enzyme">
    <location>
        <begin position="1"/>
        <end position="400"/>
    </location>
</feature>
<feature type="binding site" evidence="1">
    <location>
        <position position="28"/>
    </location>
    <ligand>
        <name>ATP</name>
        <dbReference type="ChEBI" id="CHEBI:30616"/>
    </ligand>
</feature>
<feature type="binding site" evidence="1">
    <location>
        <position position="28"/>
    </location>
    <ligand>
        <name>CTP</name>
        <dbReference type="ChEBI" id="CHEBI:37563"/>
    </ligand>
</feature>
<feature type="binding site" evidence="1">
    <location>
        <position position="31"/>
    </location>
    <ligand>
        <name>ATP</name>
        <dbReference type="ChEBI" id="CHEBI:30616"/>
    </ligand>
</feature>
<feature type="binding site" evidence="1">
    <location>
        <position position="31"/>
    </location>
    <ligand>
        <name>CTP</name>
        <dbReference type="ChEBI" id="CHEBI:37563"/>
    </ligand>
</feature>
<feature type="binding site" evidence="1">
    <location>
        <position position="41"/>
    </location>
    <ligand>
        <name>Mg(2+)</name>
        <dbReference type="ChEBI" id="CHEBI:18420"/>
    </ligand>
</feature>
<feature type="binding site" evidence="1">
    <location>
        <position position="43"/>
    </location>
    <ligand>
        <name>Mg(2+)</name>
        <dbReference type="ChEBI" id="CHEBI:18420"/>
    </ligand>
</feature>
<feature type="binding site" evidence="1">
    <location>
        <position position="112"/>
    </location>
    <ligand>
        <name>ATP</name>
        <dbReference type="ChEBI" id="CHEBI:30616"/>
    </ligand>
</feature>
<feature type="binding site" evidence="1">
    <location>
        <position position="112"/>
    </location>
    <ligand>
        <name>CTP</name>
        <dbReference type="ChEBI" id="CHEBI:37563"/>
    </ligand>
</feature>
<feature type="binding site" evidence="1">
    <location>
        <position position="155"/>
    </location>
    <ligand>
        <name>ATP</name>
        <dbReference type="ChEBI" id="CHEBI:30616"/>
    </ligand>
</feature>
<feature type="binding site" evidence="1">
    <location>
        <position position="155"/>
    </location>
    <ligand>
        <name>CTP</name>
        <dbReference type="ChEBI" id="CHEBI:37563"/>
    </ligand>
</feature>
<feature type="binding site" evidence="1">
    <location>
        <position position="158"/>
    </location>
    <ligand>
        <name>ATP</name>
        <dbReference type="ChEBI" id="CHEBI:30616"/>
    </ligand>
</feature>
<feature type="binding site" evidence="1">
    <location>
        <position position="158"/>
    </location>
    <ligand>
        <name>CTP</name>
        <dbReference type="ChEBI" id="CHEBI:37563"/>
    </ligand>
</feature>
<feature type="binding site" evidence="1">
    <location>
        <position position="161"/>
    </location>
    <ligand>
        <name>ATP</name>
        <dbReference type="ChEBI" id="CHEBI:30616"/>
    </ligand>
</feature>
<feature type="binding site" evidence="1">
    <location>
        <position position="161"/>
    </location>
    <ligand>
        <name>CTP</name>
        <dbReference type="ChEBI" id="CHEBI:37563"/>
    </ligand>
</feature>
<feature type="binding site" evidence="1">
    <location>
        <position position="164"/>
    </location>
    <ligand>
        <name>ATP</name>
        <dbReference type="ChEBI" id="CHEBI:30616"/>
    </ligand>
</feature>
<feature type="binding site" evidence="1">
    <location>
        <position position="164"/>
    </location>
    <ligand>
        <name>CTP</name>
        <dbReference type="ChEBI" id="CHEBI:37563"/>
    </ligand>
</feature>
<sequence length="400" mass="46436">MDKSLFEQARPILEQIQDNGFEAYYVGGSVRDYVMGRNIHDIDITTSATPDEIESIFSHTIPVGKEHGTINVVFNDENYEVTTFRAEEDYVDHRRPSGVTFVRDLYEDLQRRDFTMNAIAMDTAYKLYDYFDGQQDINNRIIRTVGIAEERFQEDALRMIRCLRFQSQLSFDIATETFEAMRIQMADIKFLSIERIVIELTKLMRGINVEKSFNHLKSLKAFNYMPYFEHLDMNQINVTEAIDLELLIAIVSVKFDINYSLKPLKLSNRQVKDINQYIQIMNALPSIITKEQLKMFVYDYDTHLIKNVMVAADVIKANDIQGHEPLIVNLQTIDETLHRLPMHNRKDMMVNGGVLMAHLNAKSGPWLKDVLRQIEIAIVTGKVSNEETEILKWVDNHVKI</sequence>
<keyword id="KW-0067">ATP-binding</keyword>
<keyword id="KW-0460">Magnesium</keyword>
<keyword id="KW-0479">Metal-binding</keyword>
<keyword id="KW-0547">Nucleotide-binding</keyword>
<keyword id="KW-0548">Nucleotidyltransferase</keyword>
<keyword id="KW-0692">RNA repair</keyword>
<keyword id="KW-0694">RNA-binding</keyword>
<keyword id="KW-0808">Transferase</keyword>
<keyword id="KW-0819">tRNA processing</keyword>
<comment type="function">
    <text evidence="1">Catalyzes the addition and repair of the essential 3'-terminal CCA sequence in tRNAs without using a nucleic acid template. Adds these three nucleotides in the order of C, C, and A to the tRNA nucleotide-73, using CTP and ATP as substrates and producing inorganic pyrophosphate. tRNA 3'-terminal CCA addition is required both for tRNA processing and repair. Also involved in tRNA surveillance by mediating tandem CCA addition to generate a CCACCA at the 3' terminus of unstable tRNAs. While stable tRNAs receive only 3'-terminal CCA, unstable tRNAs are marked with CCACCA and rapidly degraded.</text>
</comment>
<comment type="catalytic activity">
    <reaction evidence="1">
        <text>a tRNA precursor + 2 CTP + ATP = a tRNA with a 3' CCA end + 3 diphosphate</text>
        <dbReference type="Rhea" id="RHEA:14433"/>
        <dbReference type="Rhea" id="RHEA-COMP:10465"/>
        <dbReference type="Rhea" id="RHEA-COMP:10468"/>
        <dbReference type="ChEBI" id="CHEBI:30616"/>
        <dbReference type="ChEBI" id="CHEBI:33019"/>
        <dbReference type="ChEBI" id="CHEBI:37563"/>
        <dbReference type="ChEBI" id="CHEBI:74896"/>
        <dbReference type="ChEBI" id="CHEBI:83071"/>
        <dbReference type="EC" id="2.7.7.72"/>
    </reaction>
</comment>
<comment type="catalytic activity">
    <reaction evidence="1">
        <text>a tRNA with a 3' CCA end + 2 CTP + ATP = a tRNA with a 3' CCACCA end + 3 diphosphate</text>
        <dbReference type="Rhea" id="RHEA:76235"/>
        <dbReference type="Rhea" id="RHEA-COMP:10468"/>
        <dbReference type="Rhea" id="RHEA-COMP:18655"/>
        <dbReference type="ChEBI" id="CHEBI:30616"/>
        <dbReference type="ChEBI" id="CHEBI:33019"/>
        <dbReference type="ChEBI" id="CHEBI:37563"/>
        <dbReference type="ChEBI" id="CHEBI:83071"/>
        <dbReference type="ChEBI" id="CHEBI:195187"/>
    </reaction>
    <physiologicalReaction direction="left-to-right" evidence="1">
        <dbReference type="Rhea" id="RHEA:76236"/>
    </physiologicalReaction>
</comment>
<comment type="cofactor">
    <cofactor evidence="1">
        <name>Mg(2+)</name>
        <dbReference type="ChEBI" id="CHEBI:18420"/>
    </cofactor>
</comment>
<comment type="subunit">
    <text evidence="1">Homodimer.</text>
</comment>
<comment type="miscellaneous">
    <text evidence="1">A single active site specifically recognizes both ATP and CTP and is responsible for their addition.</text>
</comment>
<comment type="similarity">
    <text evidence="1">Belongs to the tRNA nucleotidyltransferase/poly(A) polymerase family. Bacterial CCA-adding enzyme type 3 subfamily.</text>
</comment>
<reference key="1">
    <citation type="journal article" date="2004" name="Proc. Natl. Acad. Sci. U.S.A.">
        <title>Complete genomes of two clinical Staphylococcus aureus strains: evidence for the rapid evolution of virulence and drug resistance.</title>
        <authorList>
            <person name="Holden M.T.G."/>
            <person name="Feil E.J."/>
            <person name="Lindsay J.A."/>
            <person name="Peacock S.J."/>
            <person name="Day N.P.J."/>
            <person name="Enright M.C."/>
            <person name="Foster T.J."/>
            <person name="Moore C.E."/>
            <person name="Hurst L."/>
            <person name="Atkin R."/>
            <person name="Barron A."/>
            <person name="Bason N."/>
            <person name="Bentley S.D."/>
            <person name="Chillingworth C."/>
            <person name="Chillingworth T."/>
            <person name="Churcher C."/>
            <person name="Clark L."/>
            <person name="Corton C."/>
            <person name="Cronin A."/>
            <person name="Doggett J."/>
            <person name="Dowd L."/>
            <person name="Feltwell T."/>
            <person name="Hance Z."/>
            <person name="Harris B."/>
            <person name="Hauser H."/>
            <person name="Holroyd S."/>
            <person name="Jagels K."/>
            <person name="James K.D."/>
            <person name="Lennard N."/>
            <person name="Line A."/>
            <person name="Mayes R."/>
            <person name="Moule S."/>
            <person name="Mungall K."/>
            <person name="Ormond D."/>
            <person name="Quail M.A."/>
            <person name="Rabbinowitsch E."/>
            <person name="Rutherford K.M."/>
            <person name="Sanders M."/>
            <person name="Sharp S."/>
            <person name="Simmonds M."/>
            <person name="Stevens K."/>
            <person name="Whitehead S."/>
            <person name="Barrell B.G."/>
            <person name="Spratt B.G."/>
            <person name="Parkhill J."/>
        </authorList>
    </citation>
    <scope>NUCLEOTIDE SEQUENCE [LARGE SCALE GENOMIC DNA]</scope>
    <source>
        <strain>MSSA476</strain>
    </source>
</reference>
<gene>
    <name evidence="1" type="primary">cca</name>
    <name type="ordered locus">SAS1400</name>
</gene>